<gene>
    <name evidence="1" type="primary">rplM</name>
    <name type="ordered locus">Rpal_3106</name>
</gene>
<proteinExistence type="inferred from homology"/>
<comment type="function">
    <text evidence="1">This protein is one of the early assembly proteins of the 50S ribosomal subunit, although it is not seen to bind rRNA by itself. It is important during the early stages of 50S assembly.</text>
</comment>
<comment type="subunit">
    <text evidence="1">Part of the 50S ribosomal subunit.</text>
</comment>
<comment type="similarity">
    <text evidence="1">Belongs to the universal ribosomal protein uL13 family.</text>
</comment>
<keyword id="KW-0687">Ribonucleoprotein</keyword>
<keyword id="KW-0689">Ribosomal protein</keyword>
<sequence length="154" mass="17173">MKTFSAKPAEVTKKWVIIDATGLVVGRLATLVAMRLRGKHLPTYTPHVDCGDNVIIINASKVVLTGRKRDNKVYYHHTGFIGGIKERSAKAILEGRFPERVVEKAIERMIPRGPLGRVQMGNLRVYPGAEHPHEAQQPEKLDIGAMNRKNMRAA</sequence>
<dbReference type="EMBL" id="CP001096">
    <property type="protein sequence ID" value="ACF01612.1"/>
    <property type="molecule type" value="Genomic_DNA"/>
</dbReference>
<dbReference type="RefSeq" id="WP_011158318.1">
    <property type="nucleotide sequence ID" value="NC_011004.1"/>
</dbReference>
<dbReference type="SMR" id="B3QKG3"/>
<dbReference type="GeneID" id="66893844"/>
<dbReference type="KEGG" id="rpt:Rpal_3106"/>
<dbReference type="HOGENOM" id="CLU_082184_2_0_5"/>
<dbReference type="OrthoDB" id="9801330at2"/>
<dbReference type="Proteomes" id="UP000001725">
    <property type="component" value="Chromosome"/>
</dbReference>
<dbReference type="GO" id="GO:0022625">
    <property type="term" value="C:cytosolic large ribosomal subunit"/>
    <property type="evidence" value="ECO:0007669"/>
    <property type="project" value="TreeGrafter"/>
</dbReference>
<dbReference type="GO" id="GO:0003729">
    <property type="term" value="F:mRNA binding"/>
    <property type="evidence" value="ECO:0007669"/>
    <property type="project" value="TreeGrafter"/>
</dbReference>
<dbReference type="GO" id="GO:0003735">
    <property type="term" value="F:structural constituent of ribosome"/>
    <property type="evidence" value="ECO:0007669"/>
    <property type="project" value="InterPro"/>
</dbReference>
<dbReference type="GO" id="GO:0017148">
    <property type="term" value="P:negative regulation of translation"/>
    <property type="evidence" value="ECO:0007669"/>
    <property type="project" value="TreeGrafter"/>
</dbReference>
<dbReference type="GO" id="GO:0006412">
    <property type="term" value="P:translation"/>
    <property type="evidence" value="ECO:0007669"/>
    <property type="project" value="UniProtKB-UniRule"/>
</dbReference>
<dbReference type="CDD" id="cd00392">
    <property type="entry name" value="Ribosomal_L13"/>
    <property type="match status" value="1"/>
</dbReference>
<dbReference type="FunFam" id="3.90.1180.10:FF:000001">
    <property type="entry name" value="50S ribosomal protein L13"/>
    <property type="match status" value="1"/>
</dbReference>
<dbReference type="Gene3D" id="3.90.1180.10">
    <property type="entry name" value="Ribosomal protein L13"/>
    <property type="match status" value="1"/>
</dbReference>
<dbReference type="HAMAP" id="MF_01366">
    <property type="entry name" value="Ribosomal_uL13"/>
    <property type="match status" value="1"/>
</dbReference>
<dbReference type="InterPro" id="IPR005822">
    <property type="entry name" value="Ribosomal_uL13"/>
</dbReference>
<dbReference type="InterPro" id="IPR005823">
    <property type="entry name" value="Ribosomal_uL13_bac-type"/>
</dbReference>
<dbReference type="InterPro" id="IPR036899">
    <property type="entry name" value="Ribosomal_uL13_sf"/>
</dbReference>
<dbReference type="NCBIfam" id="TIGR01066">
    <property type="entry name" value="rplM_bact"/>
    <property type="match status" value="1"/>
</dbReference>
<dbReference type="PANTHER" id="PTHR11545:SF2">
    <property type="entry name" value="LARGE RIBOSOMAL SUBUNIT PROTEIN UL13M"/>
    <property type="match status" value="1"/>
</dbReference>
<dbReference type="PANTHER" id="PTHR11545">
    <property type="entry name" value="RIBOSOMAL PROTEIN L13"/>
    <property type="match status" value="1"/>
</dbReference>
<dbReference type="Pfam" id="PF00572">
    <property type="entry name" value="Ribosomal_L13"/>
    <property type="match status" value="1"/>
</dbReference>
<dbReference type="PIRSF" id="PIRSF002181">
    <property type="entry name" value="Ribosomal_L13"/>
    <property type="match status" value="1"/>
</dbReference>
<dbReference type="SUPFAM" id="SSF52161">
    <property type="entry name" value="Ribosomal protein L13"/>
    <property type="match status" value="1"/>
</dbReference>
<name>RL13_RHOPT</name>
<accession>B3QKG3</accession>
<feature type="chain" id="PRO_1000144172" description="Large ribosomal subunit protein uL13">
    <location>
        <begin position="1"/>
        <end position="154"/>
    </location>
</feature>
<protein>
    <recommendedName>
        <fullName evidence="1">Large ribosomal subunit protein uL13</fullName>
    </recommendedName>
    <alternativeName>
        <fullName evidence="2">50S ribosomal protein L13</fullName>
    </alternativeName>
</protein>
<reference key="1">
    <citation type="submission" date="2008-05" db="EMBL/GenBank/DDBJ databases">
        <title>Complete sequence of Rhodopseudomonas palustris TIE-1.</title>
        <authorList>
            <consortium name="US DOE Joint Genome Institute"/>
            <person name="Lucas S."/>
            <person name="Copeland A."/>
            <person name="Lapidus A."/>
            <person name="Glavina del Rio T."/>
            <person name="Dalin E."/>
            <person name="Tice H."/>
            <person name="Pitluck S."/>
            <person name="Chain P."/>
            <person name="Malfatti S."/>
            <person name="Shin M."/>
            <person name="Vergez L."/>
            <person name="Lang D."/>
            <person name="Schmutz J."/>
            <person name="Larimer F."/>
            <person name="Land M."/>
            <person name="Hauser L."/>
            <person name="Kyrpides N."/>
            <person name="Mikhailova N."/>
            <person name="Emerson D."/>
            <person name="Newman D.K."/>
            <person name="Roden E."/>
            <person name="Richardson P."/>
        </authorList>
    </citation>
    <scope>NUCLEOTIDE SEQUENCE [LARGE SCALE GENOMIC DNA]</scope>
    <source>
        <strain>TIE-1</strain>
    </source>
</reference>
<organism>
    <name type="scientific">Rhodopseudomonas palustris (strain TIE-1)</name>
    <dbReference type="NCBI Taxonomy" id="395960"/>
    <lineage>
        <taxon>Bacteria</taxon>
        <taxon>Pseudomonadati</taxon>
        <taxon>Pseudomonadota</taxon>
        <taxon>Alphaproteobacteria</taxon>
        <taxon>Hyphomicrobiales</taxon>
        <taxon>Nitrobacteraceae</taxon>
        <taxon>Rhodopseudomonas</taxon>
    </lineage>
</organism>
<evidence type="ECO:0000255" key="1">
    <source>
        <dbReference type="HAMAP-Rule" id="MF_01366"/>
    </source>
</evidence>
<evidence type="ECO:0000305" key="2"/>